<feature type="chain" id="PRO_0000133988" description="Enolase">
    <location>
        <begin position="1"/>
        <end position="422"/>
    </location>
</feature>
<feature type="active site" description="Proton donor" evidence="1">
    <location>
        <position position="204"/>
    </location>
</feature>
<feature type="active site" description="Proton acceptor" evidence="1">
    <location>
        <position position="337"/>
    </location>
</feature>
<feature type="binding site" evidence="1">
    <location>
        <position position="162"/>
    </location>
    <ligand>
        <name>(2R)-2-phosphoglycerate</name>
        <dbReference type="ChEBI" id="CHEBI:58289"/>
    </ligand>
</feature>
<feature type="binding site" evidence="1">
    <location>
        <position position="241"/>
    </location>
    <ligand>
        <name>Mg(2+)</name>
        <dbReference type="ChEBI" id="CHEBI:18420"/>
    </ligand>
</feature>
<feature type="binding site" evidence="1">
    <location>
        <position position="285"/>
    </location>
    <ligand>
        <name>Mg(2+)</name>
        <dbReference type="ChEBI" id="CHEBI:18420"/>
    </ligand>
</feature>
<feature type="binding site" evidence="1">
    <location>
        <position position="312"/>
    </location>
    <ligand>
        <name>Mg(2+)</name>
        <dbReference type="ChEBI" id="CHEBI:18420"/>
    </ligand>
</feature>
<feature type="binding site" evidence="1">
    <location>
        <position position="337"/>
    </location>
    <ligand>
        <name>(2R)-2-phosphoglycerate</name>
        <dbReference type="ChEBI" id="CHEBI:58289"/>
    </ligand>
</feature>
<feature type="binding site" evidence="1">
    <location>
        <position position="366"/>
    </location>
    <ligand>
        <name>(2R)-2-phosphoglycerate</name>
        <dbReference type="ChEBI" id="CHEBI:58289"/>
    </ligand>
</feature>
<feature type="binding site" evidence="1">
    <location>
        <position position="367"/>
    </location>
    <ligand>
        <name>(2R)-2-phosphoglycerate</name>
        <dbReference type="ChEBI" id="CHEBI:58289"/>
    </ligand>
</feature>
<feature type="binding site" evidence="1">
    <location>
        <position position="388"/>
    </location>
    <ligand>
        <name>(2R)-2-phosphoglycerate</name>
        <dbReference type="ChEBI" id="CHEBI:58289"/>
    </ligand>
</feature>
<geneLocation type="plasmid">
    <name>pCI65st</name>
</geneLocation>
<dbReference type="EC" id="4.2.1.11" evidence="1"/>
<dbReference type="EMBL" id="AF027167">
    <property type="protein sequence ID" value="AAC64907.1"/>
    <property type="molecule type" value="Genomic_DNA"/>
</dbReference>
<dbReference type="RefSeq" id="WP_032489351.1">
    <property type="nucleotide sequence ID" value="NZ_AF027167.1"/>
</dbReference>
<dbReference type="SMR" id="O52191"/>
<dbReference type="UniPathway" id="UPA00109">
    <property type="reaction ID" value="UER00187"/>
</dbReference>
<dbReference type="GO" id="GO:0009986">
    <property type="term" value="C:cell surface"/>
    <property type="evidence" value="ECO:0007669"/>
    <property type="project" value="UniProtKB-SubCell"/>
</dbReference>
<dbReference type="GO" id="GO:0005576">
    <property type="term" value="C:extracellular region"/>
    <property type="evidence" value="ECO:0007669"/>
    <property type="project" value="UniProtKB-SubCell"/>
</dbReference>
<dbReference type="GO" id="GO:0009274">
    <property type="term" value="C:peptidoglycan-based cell wall"/>
    <property type="evidence" value="ECO:0007669"/>
    <property type="project" value="UniProtKB-ARBA"/>
</dbReference>
<dbReference type="GO" id="GO:0000015">
    <property type="term" value="C:phosphopyruvate hydratase complex"/>
    <property type="evidence" value="ECO:0007669"/>
    <property type="project" value="InterPro"/>
</dbReference>
<dbReference type="GO" id="GO:0000287">
    <property type="term" value="F:magnesium ion binding"/>
    <property type="evidence" value="ECO:0007669"/>
    <property type="project" value="UniProtKB-UniRule"/>
</dbReference>
<dbReference type="GO" id="GO:0004634">
    <property type="term" value="F:phosphopyruvate hydratase activity"/>
    <property type="evidence" value="ECO:0007669"/>
    <property type="project" value="UniProtKB-UniRule"/>
</dbReference>
<dbReference type="GO" id="GO:0006096">
    <property type="term" value="P:glycolytic process"/>
    <property type="evidence" value="ECO:0007669"/>
    <property type="project" value="UniProtKB-UniRule"/>
</dbReference>
<dbReference type="CDD" id="cd03313">
    <property type="entry name" value="enolase"/>
    <property type="match status" value="1"/>
</dbReference>
<dbReference type="FunFam" id="3.30.390.10:FF:000001">
    <property type="entry name" value="Enolase"/>
    <property type="match status" value="1"/>
</dbReference>
<dbReference type="Gene3D" id="3.20.20.120">
    <property type="entry name" value="Enolase-like C-terminal domain"/>
    <property type="match status" value="1"/>
</dbReference>
<dbReference type="Gene3D" id="3.30.390.10">
    <property type="entry name" value="Enolase-like, N-terminal domain"/>
    <property type="match status" value="1"/>
</dbReference>
<dbReference type="HAMAP" id="MF_00318">
    <property type="entry name" value="Enolase"/>
    <property type="match status" value="1"/>
</dbReference>
<dbReference type="InterPro" id="IPR000941">
    <property type="entry name" value="Enolase"/>
</dbReference>
<dbReference type="InterPro" id="IPR036849">
    <property type="entry name" value="Enolase-like_C_sf"/>
</dbReference>
<dbReference type="InterPro" id="IPR029017">
    <property type="entry name" value="Enolase-like_N"/>
</dbReference>
<dbReference type="InterPro" id="IPR020810">
    <property type="entry name" value="Enolase_C"/>
</dbReference>
<dbReference type="InterPro" id="IPR020809">
    <property type="entry name" value="Enolase_CS"/>
</dbReference>
<dbReference type="InterPro" id="IPR020811">
    <property type="entry name" value="Enolase_N"/>
</dbReference>
<dbReference type="NCBIfam" id="TIGR01060">
    <property type="entry name" value="eno"/>
    <property type="match status" value="1"/>
</dbReference>
<dbReference type="PANTHER" id="PTHR11902">
    <property type="entry name" value="ENOLASE"/>
    <property type="match status" value="1"/>
</dbReference>
<dbReference type="PANTHER" id="PTHR11902:SF1">
    <property type="entry name" value="ENOLASE"/>
    <property type="match status" value="1"/>
</dbReference>
<dbReference type="Pfam" id="PF00113">
    <property type="entry name" value="Enolase_C"/>
    <property type="match status" value="1"/>
</dbReference>
<dbReference type="Pfam" id="PF03952">
    <property type="entry name" value="Enolase_N"/>
    <property type="match status" value="1"/>
</dbReference>
<dbReference type="PIRSF" id="PIRSF001400">
    <property type="entry name" value="Enolase"/>
    <property type="match status" value="1"/>
</dbReference>
<dbReference type="PRINTS" id="PR00148">
    <property type="entry name" value="ENOLASE"/>
</dbReference>
<dbReference type="SFLD" id="SFLDS00001">
    <property type="entry name" value="Enolase"/>
    <property type="match status" value="1"/>
</dbReference>
<dbReference type="SFLD" id="SFLDF00002">
    <property type="entry name" value="enolase"/>
    <property type="match status" value="1"/>
</dbReference>
<dbReference type="SMART" id="SM01192">
    <property type="entry name" value="Enolase_C"/>
    <property type="match status" value="1"/>
</dbReference>
<dbReference type="SMART" id="SM01193">
    <property type="entry name" value="Enolase_N"/>
    <property type="match status" value="1"/>
</dbReference>
<dbReference type="SUPFAM" id="SSF51604">
    <property type="entry name" value="Enolase C-terminal domain-like"/>
    <property type="match status" value="1"/>
</dbReference>
<dbReference type="SUPFAM" id="SSF54826">
    <property type="entry name" value="Enolase N-terminal domain-like"/>
    <property type="match status" value="1"/>
</dbReference>
<dbReference type="PROSITE" id="PS00164">
    <property type="entry name" value="ENOLASE"/>
    <property type="match status" value="1"/>
</dbReference>
<evidence type="ECO:0000255" key="1">
    <source>
        <dbReference type="HAMAP-Rule" id="MF_00318"/>
    </source>
</evidence>
<organism>
    <name type="scientific">Streptococcus thermophilus</name>
    <dbReference type="NCBI Taxonomy" id="1308"/>
    <lineage>
        <taxon>Bacteria</taxon>
        <taxon>Bacillati</taxon>
        <taxon>Bacillota</taxon>
        <taxon>Bacilli</taxon>
        <taxon>Lactobacillales</taxon>
        <taxon>Streptococcaceae</taxon>
        <taxon>Streptococcus</taxon>
    </lineage>
</organism>
<keyword id="KW-0963">Cytoplasm</keyword>
<keyword id="KW-0324">Glycolysis</keyword>
<keyword id="KW-0456">Lyase</keyword>
<keyword id="KW-0460">Magnesium</keyword>
<keyword id="KW-0479">Metal-binding</keyword>
<keyword id="KW-0614">Plasmid</keyword>
<keyword id="KW-0964">Secreted</keyword>
<gene>
    <name evidence="1" type="primary">eno</name>
</gene>
<proteinExistence type="inferred from homology"/>
<reference key="1">
    <citation type="submission" date="1997-09" db="EMBL/GenBank/DDBJ databases">
        <title>pCI65st, a 6.5 kb plasmid from Streptococcus thermophilus NDI-6, harbours genes encoding two small heat shock proteins, enolase and a putative specificity subunit protein from a type I R/M system.</title>
        <authorList>
            <person name="O'Sullivan T.F."/>
            <person name="Fitzgerald G.F."/>
        </authorList>
    </citation>
    <scope>NUCLEOTIDE SEQUENCE [GENOMIC DNA]</scope>
    <source>
        <strain>NDI-6</strain>
    </source>
</reference>
<accession>O52191</accession>
<comment type="function">
    <text evidence="1">Catalyzes the reversible conversion of 2-phosphoglycerate (2-PG) into phosphoenolpyruvate (PEP). It is essential for the degradation of carbohydrates via glycolysis.</text>
</comment>
<comment type="catalytic activity">
    <reaction evidence="1">
        <text>(2R)-2-phosphoglycerate = phosphoenolpyruvate + H2O</text>
        <dbReference type="Rhea" id="RHEA:10164"/>
        <dbReference type="ChEBI" id="CHEBI:15377"/>
        <dbReference type="ChEBI" id="CHEBI:58289"/>
        <dbReference type="ChEBI" id="CHEBI:58702"/>
        <dbReference type="EC" id="4.2.1.11"/>
    </reaction>
</comment>
<comment type="cofactor">
    <cofactor evidence="1">
        <name>Mg(2+)</name>
        <dbReference type="ChEBI" id="CHEBI:18420"/>
    </cofactor>
    <text evidence="1">Binds a second Mg(2+) ion via substrate during catalysis.</text>
</comment>
<comment type="pathway">
    <text evidence="1">Carbohydrate degradation; glycolysis; pyruvate from D-glyceraldehyde 3-phosphate: step 4/5.</text>
</comment>
<comment type="subcellular location">
    <subcellularLocation>
        <location evidence="1">Cytoplasm</location>
    </subcellularLocation>
    <subcellularLocation>
        <location evidence="1">Secreted</location>
    </subcellularLocation>
    <subcellularLocation>
        <location evidence="1">Cell surface</location>
    </subcellularLocation>
    <text evidence="1">Fractions of enolase are present in both the cytoplasm and on the cell surface.</text>
</comment>
<comment type="similarity">
    <text evidence="1">Belongs to the enolase family.</text>
</comment>
<name>ENO_STRTR</name>
<protein>
    <recommendedName>
        <fullName evidence="1">Enolase</fullName>
        <ecNumber evidence="1">4.2.1.11</ecNumber>
    </recommendedName>
    <alternativeName>
        <fullName evidence="1">2-phospho-D-glycerate hydro-lyase</fullName>
    </alternativeName>
    <alternativeName>
        <fullName evidence="1">2-phosphoglycerate dehydratase</fullName>
    </alternativeName>
</protein>
<sequence length="422" mass="46081">MTVTIENIHAREIFDSRGNPTVEVDVRLTDGTLGRAAVPSGASTGDREAVELRDGGARLQGKGVSKAVANVNGEIYEALKGQSPFNQAKLDHLMIELDGTENKSCLGANAILGVSMAIFRAAANSEKIPLYRYFGGVDLELPQPFFNVINGGVHADSGIDVQEFLITPVKRDSFRDGLKKIANIYHTLKKILSDKGLKTPVGDEGGFAPKLGTTENAIAILYQPIDSAGYFPGEKIAIAIDSSSIEFYDDKKKFYRFEGKNLTSKELLTYYDNLVEKYPALISIEDGFSEHDWEGFAAQTKARGQKIQLVGDDIFVTNPTIFKEGIKKNVANAILIKLNQIGTVTETIETISLARKAGYKTMISHRSGETVDSYIADFSVAMHAGQIKSGSMARSERVEKYNQLLRIEEDLGKDVALAQFPG</sequence>